<name>RL16_ALISL</name>
<proteinExistence type="inferred from homology"/>
<protein>
    <recommendedName>
        <fullName evidence="1">Large ribosomal subunit protein uL16</fullName>
    </recommendedName>
    <alternativeName>
        <fullName evidence="2">50S ribosomal protein L16</fullName>
    </alternativeName>
</protein>
<dbReference type="EMBL" id="FM178379">
    <property type="protein sequence ID" value="CAQ78012.1"/>
    <property type="molecule type" value="Genomic_DNA"/>
</dbReference>
<dbReference type="RefSeq" id="WP_012549157.1">
    <property type="nucleotide sequence ID" value="NC_011312.1"/>
</dbReference>
<dbReference type="SMR" id="B6EPT2"/>
<dbReference type="KEGG" id="vsa:VSAL_I0327"/>
<dbReference type="eggNOG" id="COG0197">
    <property type="taxonomic scope" value="Bacteria"/>
</dbReference>
<dbReference type="HOGENOM" id="CLU_078858_2_1_6"/>
<dbReference type="Proteomes" id="UP000001730">
    <property type="component" value="Chromosome 1"/>
</dbReference>
<dbReference type="GO" id="GO:0022625">
    <property type="term" value="C:cytosolic large ribosomal subunit"/>
    <property type="evidence" value="ECO:0007669"/>
    <property type="project" value="TreeGrafter"/>
</dbReference>
<dbReference type="GO" id="GO:0019843">
    <property type="term" value="F:rRNA binding"/>
    <property type="evidence" value="ECO:0007669"/>
    <property type="project" value="UniProtKB-UniRule"/>
</dbReference>
<dbReference type="GO" id="GO:0003735">
    <property type="term" value="F:structural constituent of ribosome"/>
    <property type="evidence" value="ECO:0007669"/>
    <property type="project" value="InterPro"/>
</dbReference>
<dbReference type="GO" id="GO:0000049">
    <property type="term" value="F:tRNA binding"/>
    <property type="evidence" value="ECO:0007669"/>
    <property type="project" value="UniProtKB-KW"/>
</dbReference>
<dbReference type="GO" id="GO:0006412">
    <property type="term" value="P:translation"/>
    <property type="evidence" value="ECO:0007669"/>
    <property type="project" value="UniProtKB-UniRule"/>
</dbReference>
<dbReference type="CDD" id="cd01433">
    <property type="entry name" value="Ribosomal_L16_L10e"/>
    <property type="match status" value="1"/>
</dbReference>
<dbReference type="FunFam" id="3.90.1170.10:FF:000001">
    <property type="entry name" value="50S ribosomal protein L16"/>
    <property type="match status" value="1"/>
</dbReference>
<dbReference type="Gene3D" id="3.90.1170.10">
    <property type="entry name" value="Ribosomal protein L10e/L16"/>
    <property type="match status" value="1"/>
</dbReference>
<dbReference type="HAMAP" id="MF_01342">
    <property type="entry name" value="Ribosomal_uL16"/>
    <property type="match status" value="1"/>
</dbReference>
<dbReference type="InterPro" id="IPR047873">
    <property type="entry name" value="Ribosomal_uL16"/>
</dbReference>
<dbReference type="InterPro" id="IPR000114">
    <property type="entry name" value="Ribosomal_uL16_bact-type"/>
</dbReference>
<dbReference type="InterPro" id="IPR020798">
    <property type="entry name" value="Ribosomal_uL16_CS"/>
</dbReference>
<dbReference type="InterPro" id="IPR016180">
    <property type="entry name" value="Ribosomal_uL16_dom"/>
</dbReference>
<dbReference type="InterPro" id="IPR036920">
    <property type="entry name" value="Ribosomal_uL16_sf"/>
</dbReference>
<dbReference type="NCBIfam" id="TIGR01164">
    <property type="entry name" value="rplP_bact"/>
    <property type="match status" value="1"/>
</dbReference>
<dbReference type="PANTHER" id="PTHR12220">
    <property type="entry name" value="50S/60S RIBOSOMAL PROTEIN L16"/>
    <property type="match status" value="1"/>
</dbReference>
<dbReference type="PANTHER" id="PTHR12220:SF13">
    <property type="entry name" value="LARGE RIBOSOMAL SUBUNIT PROTEIN UL16M"/>
    <property type="match status" value="1"/>
</dbReference>
<dbReference type="Pfam" id="PF00252">
    <property type="entry name" value="Ribosomal_L16"/>
    <property type="match status" value="1"/>
</dbReference>
<dbReference type="PRINTS" id="PR00060">
    <property type="entry name" value="RIBOSOMALL16"/>
</dbReference>
<dbReference type="SUPFAM" id="SSF54686">
    <property type="entry name" value="Ribosomal protein L16p/L10e"/>
    <property type="match status" value="1"/>
</dbReference>
<dbReference type="PROSITE" id="PS00586">
    <property type="entry name" value="RIBOSOMAL_L16_1"/>
    <property type="match status" value="1"/>
</dbReference>
<accession>B6EPT2</accession>
<evidence type="ECO:0000255" key="1">
    <source>
        <dbReference type="HAMAP-Rule" id="MF_01342"/>
    </source>
</evidence>
<evidence type="ECO:0000305" key="2"/>
<sequence length="136" mass="15565">MLQPKRTKFRKVMTGRNRGLAKGTEVSFGEFGLKAVGRGRLTARQIEAARRAMTRHVKRQGQIWIRVFPDKPITEKPLEVRQGKGKGNVEYWVAQIQPGKVMYEMNGVPEELAREAFRLAARKLPIKTTFVTKQVM</sequence>
<reference key="1">
    <citation type="journal article" date="2008" name="BMC Genomics">
        <title>The genome sequence of the fish pathogen Aliivibrio salmonicida strain LFI1238 shows extensive evidence of gene decay.</title>
        <authorList>
            <person name="Hjerde E."/>
            <person name="Lorentzen M.S."/>
            <person name="Holden M.T."/>
            <person name="Seeger K."/>
            <person name="Paulsen S."/>
            <person name="Bason N."/>
            <person name="Churcher C."/>
            <person name="Harris D."/>
            <person name="Norbertczak H."/>
            <person name="Quail M.A."/>
            <person name="Sanders S."/>
            <person name="Thurston S."/>
            <person name="Parkhill J."/>
            <person name="Willassen N.P."/>
            <person name="Thomson N.R."/>
        </authorList>
    </citation>
    <scope>NUCLEOTIDE SEQUENCE [LARGE SCALE GENOMIC DNA]</scope>
    <source>
        <strain>LFI1238</strain>
    </source>
</reference>
<organism>
    <name type="scientific">Aliivibrio salmonicida (strain LFI1238)</name>
    <name type="common">Vibrio salmonicida (strain LFI1238)</name>
    <dbReference type="NCBI Taxonomy" id="316275"/>
    <lineage>
        <taxon>Bacteria</taxon>
        <taxon>Pseudomonadati</taxon>
        <taxon>Pseudomonadota</taxon>
        <taxon>Gammaproteobacteria</taxon>
        <taxon>Vibrionales</taxon>
        <taxon>Vibrionaceae</taxon>
        <taxon>Aliivibrio</taxon>
    </lineage>
</organism>
<keyword id="KW-0687">Ribonucleoprotein</keyword>
<keyword id="KW-0689">Ribosomal protein</keyword>
<keyword id="KW-0694">RNA-binding</keyword>
<keyword id="KW-0699">rRNA-binding</keyword>
<keyword id="KW-0820">tRNA-binding</keyword>
<comment type="function">
    <text evidence="1">Binds 23S rRNA and is also seen to make contacts with the A and possibly P site tRNAs.</text>
</comment>
<comment type="subunit">
    <text evidence="1">Part of the 50S ribosomal subunit.</text>
</comment>
<comment type="similarity">
    <text evidence="1">Belongs to the universal ribosomal protein uL16 family.</text>
</comment>
<gene>
    <name evidence="1" type="primary">rplP</name>
    <name type="ordered locus">VSAL_I0327</name>
</gene>
<feature type="chain" id="PRO_1000142916" description="Large ribosomal subunit protein uL16">
    <location>
        <begin position="1"/>
        <end position="136"/>
    </location>
</feature>